<comment type="function">
    <text evidence="1">Catalyzes the ATP-dependent phosphorylation of thiamine to thiamine phosphate. Is involved in thiamine salvage.</text>
</comment>
<comment type="catalytic activity">
    <reaction evidence="1">
        <text>thiamine + ATP = thiamine phosphate + ADP + H(+)</text>
        <dbReference type="Rhea" id="RHEA:12012"/>
        <dbReference type="ChEBI" id="CHEBI:15378"/>
        <dbReference type="ChEBI" id="CHEBI:18385"/>
        <dbReference type="ChEBI" id="CHEBI:30616"/>
        <dbReference type="ChEBI" id="CHEBI:37575"/>
        <dbReference type="ChEBI" id="CHEBI:456216"/>
        <dbReference type="EC" id="2.7.1.89"/>
    </reaction>
    <physiologicalReaction direction="left-to-right" evidence="1">
        <dbReference type="Rhea" id="RHEA:12013"/>
    </physiologicalReaction>
</comment>
<comment type="pathway">
    <text evidence="1">Cofactor biosynthesis; thiamine diphosphate biosynthesis; thiamine phosphate from thiamine: step 1/1.</text>
</comment>
<comment type="similarity">
    <text evidence="1">Belongs to the thiamine kinase family.</text>
</comment>
<proteinExistence type="inferred from homology"/>
<keyword id="KW-0067">ATP-binding</keyword>
<keyword id="KW-0418">Kinase</keyword>
<keyword id="KW-0547">Nucleotide-binding</keyword>
<keyword id="KW-1185">Reference proteome</keyword>
<keyword id="KW-0808">Transferase</keyword>
<reference key="1">
    <citation type="journal article" date="2001" name="Nature">
        <title>Genome sequence of enterohaemorrhagic Escherichia coli O157:H7.</title>
        <authorList>
            <person name="Perna N.T."/>
            <person name="Plunkett G. III"/>
            <person name="Burland V."/>
            <person name="Mau B."/>
            <person name="Glasner J.D."/>
            <person name="Rose D.J."/>
            <person name="Mayhew G.F."/>
            <person name="Evans P.S."/>
            <person name="Gregor J."/>
            <person name="Kirkpatrick H.A."/>
            <person name="Posfai G."/>
            <person name="Hackett J."/>
            <person name="Klink S."/>
            <person name="Boutin A."/>
            <person name="Shao Y."/>
            <person name="Miller L."/>
            <person name="Grotbeck E.J."/>
            <person name="Davis N.W."/>
            <person name="Lim A."/>
            <person name="Dimalanta E.T."/>
            <person name="Potamousis K."/>
            <person name="Apodaca J."/>
            <person name="Anantharaman T.S."/>
            <person name="Lin J."/>
            <person name="Yen G."/>
            <person name="Schwartz D.C."/>
            <person name="Welch R.A."/>
            <person name="Blattner F.R."/>
        </authorList>
    </citation>
    <scope>NUCLEOTIDE SEQUENCE [LARGE SCALE GENOMIC DNA]</scope>
    <source>
        <strain>O157:H7 / EDL933 / ATCC 700927 / EHEC</strain>
    </source>
</reference>
<reference key="2">
    <citation type="journal article" date="2001" name="DNA Res.">
        <title>Complete genome sequence of enterohemorrhagic Escherichia coli O157:H7 and genomic comparison with a laboratory strain K-12.</title>
        <authorList>
            <person name="Hayashi T."/>
            <person name="Makino K."/>
            <person name="Ohnishi M."/>
            <person name="Kurokawa K."/>
            <person name="Ishii K."/>
            <person name="Yokoyama K."/>
            <person name="Han C.-G."/>
            <person name="Ohtsubo E."/>
            <person name="Nakayama K."/>
            <person name="Murata T."/>
            <person name="Tanaka M."/>
            <person name="Tobe T."/>
            <person name="Iida T."/>
            <person name="Takami H."/>
            <person name="Honda T."/>
            <person name="Sasakawa C."/>
            <person name="Ogasawara N."/>
            <person name="Yasunaga T."/>
            <person name="Kuhara S."/>
            <person name="Shiba T."/>
            <person name="Hattori M."/>
            <person name="Shinagawa H."/>
        </authorList>
    </citation>
    <scope>NUCLEOTIDE SEQUENCE [LARGE SCALE GENOMIC DNA]</scope>
    <source>
        <strain>O157:H7 / Sakai / RIMD 0509952 / EHEC</strain>
    </source>
</reference>
<dbReference type="EC" id="2.7.1.89" evidence="1"/>
<dbReference type="EMBL" id="AE005174">
    <property type="protein sequence ID" value="AAG55852.1"/>
    <property type="molecule type" value="Genomic_DNA"/>
</dbReference>
<dbReference type="EMBL" id="BA000007">
    <property type="protein sequence ID" value="BAB34907.1"/>
    <property type="molecule type" value="Genomic_DNA"/>
</dbReference>
<dbReference type="PIR" id="D90814">
    <property type="entry name" value="D90814"/>
</dbReference>
<dbReference type="PIR" id="H85673">
    <property type="entry name" value="H85673"/>
</dbReference>
<dbReference type="RefSeq" id="NP_309511.1">
    <property type="nucleotide sequence ID" value="NC_002695.1"/>
</dbReference>
<dbReference type="RefSeq" id="WP_001116570.1">
    <property type="nucleotide sequence ID" value="NZ_VOAI01000018.1"/>
</dbReference>
<dbReference type="SMR" id="Q8X8G6"/>
<dbReference type="STRING" id="155864.Z1745"/>
<dbReference type="DNASU" id="913746"/>
<dbReference type="GeneID" id="75171230"/>
<dbReference type="GeneID" id="913746"/>
<dbReference type="KEGG" id="ece:Z1745"/>
<dbReference type="KEGG" id="ecs:ECs_1484"/>
<dbReference type="PATRIC" id="fig|386585.9.peg.1585"/>
<dbReference type="eggNOG" id="COG0510">
    <property type="taxonomic scope" value="Bacteria"/>
</dbReference>
<dbReference type="HOGENOM" id="CLU_055115_2_1_6"/>
<dbReference type="OMA" id="LMAGWYE"/>
<dbReference type="UniPathway" id="UPA00060">
    <property type="reaction ID" value="UER00596"/>
</dbReference>
<dbReference type="Proteomes" id="UP000000558">
    <property type="component" value="Chromosome"/>
</dbReference>
<dbReference type="Proteomes" id="UP000002519">
    <property type="component" value="Chromosome"/>
</dbReference>
<dbReference type="GO" id="GO:0005524">
    <property type="term" value="F:ATP binding"/>
    <property type="evidence" value="ECO:0007669"/>
    <property type="project" value="UniProtKB-KW"/>
</dbReference>
<dbReference type="GO" id="GO:0019165">
    <property type="term" value="F:thiamine kinase activity"/>
    <property type="evidence" value="ECO:0007669"/>
    <property type="project" value="UniProtKB-UniRule"/>
</dbReference>
<dbReference type="GO" id="GO:0009229">
    <property type="term" value="P:thiamine diphosphate biosynthetic process"/>
    <property type="evidence" value="ECO:0007669"/>
    <property type="project" value="UniProtKB-UniRule"/>
</dbReference>
<dbReference type="GO" id="GO:0006772">
    <property type="term" value="P:thiamine metabolic process"/>
    <property type="evidence" value="ECO:0007669"/>
    <property type="project" value="InterPro"/>
</dbReference>
<dbReference type="FunFam" id="3.90.1200.10:FF:000004">
    <property type="entry name" value="Thiamine kinase"/>
    <property type="match status" value="1"/>
</dbReference>
<dbReference type="Gene3D" id="3.90.1200.10">
    <property type="match status" value="1"/>
</dbReference>
<dbReference type="HAMAP" id="MF_01604">
    <property type="entry name" value="Thiamine_kinase"/>
    <property type="match status" value="1"/>
</dbReference>
<dbReference type="InterPro" id="IPR002575">
    <property type="entry name" value="Aminoglycoside_PTrfase"/>
</dbReference>
<dbReference type="InterPro" id="IPR011009">
    <property type="entry name" value="Kinase-like_dom_sf"/>
</dbReference>
<dbReference type="InterPro" id="IPR014093">
    <property type="entry name" value="Thiamine_kinase"/>
</dbReference>
<dbReference type="NCBIfam" id="NF007620">
    <property type="entry name" value="PRK10271.1"/>
    <property type="match status" value="1"/>
</dbReference>
<dbReference type="NCBIfam" id="TIGR02721">
    <property type="entry name" value="ycfN_thiK"/>
    <property type="match status" value="1"/>
</dbReference>
<dbReference type="Pfam" id="PF01636">
    <property type="entry name" value="APH"/>
    <property type="match status" value="1"/>
</dbReference>
<dbReference type="SUPFAM" id="SSF56112">
    <property type="entry name" value="Protein kinase-like (PK-like)"/>
    <property type="match status" value="1"/>
</dbReference>
<sequence>MPFRSNNPITRDELLSRFFPQFHPVTTFNSGLSGGSFLIEHQGQRFVVRQPHDPDAPQSAFLRQYRALSQLPACIAPKPHLYLRDWMVVDYLPGEVKTYLPDTNELAGLLYYLHQQPRFGWRITLLPLLELYWQQSDPARRTVGWLRMLKRLRKAREPRPLRLSPLHMDVHAGNLVHSASGLKLIDWEYAGDGDIALELAAVWVENTEQHRQLVNDYATRAKIYPAQLWRQVRRWFPWLLMLKAGWFEYRWRQTGDQQFIRLADDTWRQLLIKQ</sequence>
<feature type="chain" id="PRO_0000218059" description="Thiamine kinase">
    <location>
        <begin position="1"/>
        <end position="274"/>
    </location>
</feature>
<protein>
    <recommendedName>
        <fullName evidence="1">Thiamine kinase</fullName>
        <ecNumber evidence="1">2.7.1.89</ecNumber>
    </recommendedName>
</protein>
<organism>
    <name type="scientific">Escherichia coli O157:H7</name>
    <dbReference type="NCBI Taxonomy" id="83334"/>
    <lineage>
        <taxon>Bacteria</taxon>
        <taxon>Pseudomonadati</taxon>
        <taxon>Pseudomonadota</taxon>
        <taxon>Gammaproteobacteria</taxon>
        <taxon>Enterobacterales</taxon>
        <taxon>Enterobacteriaceae</taxon>
        <taxon>Escherichia</taxon>
    </lineage>
</organism>
<name>THIK_ECO57</name>
<evidence type="ECO:0000255" key="1">
    <source>
        <dbReference type="HAMAP-Rule" id="MF_01604"/>
    </source>
</evidence>
<gene>
    <name evidence="1" type="primary">thiK</name>
    <name type="ordered locus">Z1745</name>
    <name type="ordered locus">ECs1484</name>
</gene>
<accession>Q8X8G6</accession>
<accession>Q7AF80</accession>